<name>GLMM_CHLTR</name>
<evidence type="ECO:0000255" key="1">
    <source>
        <dbReference type="HAMAP-Rule" id="MF_01554"/>
    </source>
</evidence>
<sequence>MTRDVRQLFGTDGVRGRANFEPMTVETSVLLGKAIAGVLLEKHAGKHRVVVGKDTRLSGYMFENALIAGLTSMGIETLMLGPIPTPGVAFITRAYRADAGIMISASHNPYRDNGIKIFSSDGFKIGQAVEERIEAMVASKDFGKLPDDHAVGKNKRVKDATGRYIEYAKATFPKGRTLKGLRIVLDCAHGATYRVAPSVFEELDAEVICYGCEPSGCNINAGCGALWPSTIQKAVIEHKADVGIALDGDGDRLIMVDEKGHIVDGDMLLSICASDLKRRQALSDNRVVATVMTNFGVLRYLESLGIQVTISPVGDRHVLQHMLENQAVLGGEQSGHMIFLDYNTTGDGIVSALQVLRIMIESESTLSDLTACIAKSPQALINVPVTKKVPLESLANVQGVLKEVKEVLGDSGRILLRYSGTENICRVMVEGTKKHQVDSLAKTIVDVVEAEIGAEISE</sequence>
<keyword id="KW-0413">Isomerase</keyword>
<keyword id="KW-0460">Magnesium</keyword>
<keyword id="KW-0479">Metal-binding</keyword>
<keyword id="KW-0597">Phosphoprotein</keyword>
<keyword id="KW-1185">Reference proteome</keyword>
<comment type="function">
    <text evidence="1">Catalyzes the conversion of glucosamine-6-phosphate to glucosamine-1-phosphate.</text>
</comment>
<comment type="catalytic activity">
    <reaction evidence="1">
        <text>alpha-D-glucosamine 1-phosphate = D-glucosamine 6-phosphate</text>
        <dbReference type="Rhea" id="RHEA:23424"/>
        <dbReference type="ChEBI" id="CHEBI:58516"/>
        <dbReference type="ChEBI" id="CHEBI:58725"/>
        <dbReference type="EC" id="5.4.2.10"/>
    </reaction>
</comment>
<comment type="cofactor">
    <cofactor evidence="1">
        <name>Mg(2+)</name>
        <dbReference type="ChEBI" id="CHEBI:18420"/>
    </cofactor>
    <text evidence="1">Binds 1 Mg(2+) ion per subunit.</text>
</comment>
<comment type="PTM">
    <text evidence="1">Activated by phosphorylation.</text>
</comment>
<comment type="similarity">
    <text evidence="1">Belongs to the phosphohexose mutase family.</text>
</comment>
<organism>
    <name type="scientific">Chlamydia trachomatis serovar D (strain ATCC VR-885 / DSM 19411 / UW-3/Cx)</name>
    <dbReference type="NCBI Taxonomy" id="272561"/>
    <lineage>
        <taxon>Bacteria</taxon>
        <taxon>Pseudomonadati</taxon>
        <taxon>Chlamydiota</taxon>
        <taxon>Chlamydiia</taxon>
        <taxon>Chlamydiales</taxon>
        <taxon>Chlamydiaceae</taxon>
        <taxon>Chlamydia/Chlamydophila group</taxon>
        <taxon>Chlamydia</taxon>
    </lineage>
</organism>
<accession>O84822</accession>
<reference key="1">
    <citation type="journal article" date="1998" name="Science">
        <title>Genome sequence of an obligate intracellular pathogen of humans: Chlamydia trachomatis.</title>
        <authorList>
            <person name="Stephens R.S."/>
            <person name="Kalman S."/>
            <person name="Lammel C.J."/>
            <person name="Fan J."/>
            <person name="Marathe R."/>
            <person name="Aravind L."/>
            <person name="Mitchell W.P."/>
            <person name="Olinger L."/>
            <person name="Tatusov R.L."/>
            <person name="Zhao Q."/>
            <person name="Koonin E.V."/>
            <person name="Davis R.W."/>
        </authorList>
    </citation>
    <scope>NUCLEOTIDE SEQUENCE [LARGE SCALE GENOMIC DNA]</scope>
    <source>
        <strain>ATCC VR-885 / DSM 19411 / UW-3/Cx</strain>
    </source>
</reference>
<proteinExistence type="inferred from homology"/>
<dbReference type="EC" id="5.4.2.10" evidence="1"/>
<dbReference type="EMBL" id="AE001273">
    <property type="protein sequence ID" value="AAC68412.1"/>
    <property type="molecule type" value="Genomic_DNA"/>
</dbReference>
<dbReference type="PIR" id="A71467">
    <property type="entry name" value="A71467"/>
</dbReference>
<dbReference type="RefSeq" id="WP_010725355.1">
    <property type="nucleotide sequence ID" value="NC_000117.1"/>
</dbReference>
<dbReference type="SMR" id="O84822"/>
<dbReference type="FunCoup" id="O84822">
    <property type="interactions" value="248"/>
</dbReference>
<dbReference type="STRING" id="272561.CT_815"/>
<dbReference type="EnsemblBacteria" id="AAC68412">
    <property type="protein sequence ID" value="AAC68412"/>
    <property type="gene ID" value="CT_815"/>
</dbReference>
<dbReference type="KEGG" id="ctr:CT_815"/>
<dbReference type="PATRIC" id="fig|272561.5.peg.900"/>
<dbReference type="HOGENOM" id="CLU_016950_7_0_0"/>
<dbReference type="InParanoid" id="O84822"/>
<dbReference type="OrthoDB" id="9806956at2"/>
<dbReference type="Proteomes" id="UP000000431">
    <property type="component" value="Chromosome"/>
</dbReference>
<dbReference type="GO" id="GO:0005829">
    <property type="term" value="C:cytosol"/>
    <property type="evidence" value="ECO:0000318"/>
    <property type="project" value="GO_Central"/>
</dbReference>
<dbReference type="GO" id="GO:0000287">
    <property type="term" value="F:magnesium ion binding"/>
    <property type="evidence" value="ECO:0007669"/>
    <property type="project" value="UniProtKB-UniRule"/>
</dbReference>
<dbReference type="GO" id="GO:0008966">
    <property type="term" value="F:phosphoglucosamine mutase activity"/>
    <property type="evidence" value="ECO:0000318"/>
    <property type="project" value="GO_Central"/>
</dbReference>
<dbReference type="GO" id="GO:0004615">
    <property type="term" value="F:phosphomannomutase activity"/>
    <property type="evidence" value="ECO:0000318"/>
    <property type="project" value="GO_Central"/>
</dbReference>
<dbReference type="GO" id="GO:0005975">
    <property type="term" value="P:carbohydrate metabolic process"/>
    <property type="evidence" value="ECO:0007669"/>
    <property type="project" value="InterPro"/>
</dbReference>
<dbReference type="GO" id="GO:0009252">
    <property type="term" value="P:peptidoglycan biosynthetic process"/>
    <property type="evidence" value="ECO:0000318"/>
    <property type="project" value="GO_Central"/>
</dbReference>
<dbReference type="GO" id="GO:0006048">
    <property type="term" value="P:UDP-N-acetylglucosamine biosynthetic process"/>
    <property type="evidence" value="ECO:0000318"/>
    <property type="project" value="GO_Central"/>
</dbReference>
<dbReference type="CDD" id="cd05802">
    <property type="entry name" value="GlmM"/>
    <property type="match status" value="1"/>
</dbReference>
<dbReference type="FunFam" id="3.30.310.50:FF:000001">
    <property type="entry name" value="Phosphoglucosamine mutase"/>
    <property type="match status" value="1"/>
</dbReference>
<dbReference type="FunFam" id="3.40.120.10:FF:000001">
    <property type="entry name" value="Phosphoglucosamine mutase"/>
    <property type="match status" value="1"/>
</dbReference>
<dbReference type="FunFam" id="3.40.120.10:FF:000003">
    <property type="entry name" value="Phosphoglucosamine mutase"/>
    <property type="match status" value="1"/>
</dbReference>
<dbReference type="Gene3D" id="3.40.120.10">
    <property type="entry name" value="Alpha-D-Glucose-1,6-Bisphosphate, subunit A, domain 3"/>
    <property type="match status" value="3"/>
</dbReference>
<dbReference type="Gene3D" id="3.30.310.50">
    <property type="entry name" value="Alpha-D-phosphohexomutase, C-terminal domain"/>
    <property type="match status" value="1"/>
</dbReference>
<dbReference type="HAMAP" id="MF_01554_B">
    <property type="entry name" value="GlmM_B"/>
    <property type="match status" value="1"/>
</dbReference>
<dbReference type="InterPro" id="IPR005844">
    <property type="entry name" value="A-D-PHexomutase_a/b/a-I"/>
</dbReference>
<dbReference type="InterPro" id="IPR016055">
    <property type="entry name" value="A-D-PHexomutase_a/b/a-I/II/III"/>
</dbReference>
<dbReference type="InterPro" id="IPR005845">
    <property type="entry name" value="A-D-PHexomutase_a/b/a-II"/>
</dbReference>
<dbReference type="InterPro" id="IPR005846">
    <property type="entry name" value="A-D-PHexomutase_a/b/a-III"/>
</dbReference>
<dbReference type="InterPro" id="IPR005843">
    <property type="entry name" value="A-D-PHexomutase_C"/>
</dbReference>
<dbReference type="InterPro" id="IPR036900">
    <property type="entry name" value="A-D-PHexomutase_C_sf"/>
</dbReference>
<dbReference type="InterPro" id="IPR016066">
    <property type="entry name" value="A-D-PHexomutase_CS"/>
</dbReference>
<dbReference type="InterPro" id="IPR005841">
    <property type="entry name" value="Alpha-D-phosphohexomutase_SF"/>
</dbReference>
<dbReference type="InterPro" id="IPR006352">
    <property type="entry name" value="GlmM_bact"/>
</dbReference>
<dbReference type="InterPro" id="IPR050060">
    <property type="entry name" value="Phosphoglucosamine_mutase"/>
</dbReference>
<dbReference type="NCBIfam" id="TIGR01455">
    <property type="entry name" value="glmM"/>
    <property type="match status" value="1"/>
</dbReference>
<dbReference type="NCBIfam" id="NF008139">
    <property type="entry name" value="PRK10887.1"/>
    <property type="match status" value="1"/>
</dbReference>
<dbReference type="PANTHER" id="PTHR42946:SF1">
    <property type="entry name" value="PHOSPHOGLUCOMUTASE (ALPHA-D-GLUCOSE-1,6-BISPHOSPHATE-DEPENDENT)"/>
    <property type="match status" value="1"/>
</dbReference>
<dbReference type="PANTHER" id="PTHR42946">
    <property type="entry name" value="PHOSPHOHEXOSE MUTASE"/>
    <property type="match status" value="1"/>
</dbReference>
<dbReference type="Pfam" id="PF02878">
    <property type="entry name" value="PGM_PMM_I"/>
    <property type="match status" value="1"/>
</dbReference>
<dbReference type="Pfam" id="PF02879">
    <property type="entry name" value="PGM_PMM_II"/>
    <property type="match status" value="1"/>
</dbReference>
<dbReference type="Pfam" id="PF02880">
    <property type="entry name" value="PGM_PMM_III"/>
    <property type="match status" value="1"/>
</dbReference>
<dbReference type="Pfam" id="PF00408">
    <property type="entry name" value="PGM_PMM_IV"/>
    <property type="match status" value="1"/>
</dbReference>
<dbReference type="PRINTS" id="PR00509">
    <property type="entry name" value="PGMPMM"/>
</dbReference>
<dbReference type="SUPFAM" id="SSF55957">
    <property type="entry name" value="Phosphoglucomutase, C-terminal domain"/>
    <property type="match status" value="1"/>
</dbReference>
<dbReference type="SUPFAM" id="SSF53738">
    <property type="entry name" value="Phosphoglucomutase, first 3 domains"/>
    <property type="match status" value="3"/>
</dbReference>
<dbReference type="PROSITE" id="PS00710">
    <property type="entry name" value="PGM_PMM"/>
    <property type="match status" value="1"/>
</dbReference>
<protein>
    <recommendedName>
        <fullName evidence="1">Phosphoglucosamine mutase</fullName>
        <ecNumber evidence="1">5.4.2.10</ecNumber>
    </recommendedName>
</protein>
<gene>
    <name evidence="1" type="primary">glmM</name>
    <name type="ordered locus">CT_815</name>
</gene>
<feature type="chain" id="PRO_0000147869" description="Phosphoglucosamine mutase">
    <location>
        <begin position="1"/>
        <end position="458"/>
    </location>
</feature>
<feature type="active site" description="Phosphoserine intermediate" evidence="1">
    <location>
        <position position="106"/>
    </location>
</feature>
<feature type="binding site" description="via phosphate group" evidence="1">
    <location>
        <position position="106"/>
    </location>
    <ligand>
        <name>Mg(2+)</name>
        <dbReference type="ChEBI" id="CHEBI:18420"/>
    </ligand>
</feature>
<feature type="binding site" evidence="1">
    <location>
        <position position="247"/>
    </location>
    <ligand>
        <name>Mg(2+)</name>
        <dbReference type="ChEBI" id="CHEBI:18420"/>
    </ligand>
</feature>
<feature type="binding site" evidence="1">
    <location>
        <position position="249"/>
    </location>
    <ligand>
        <name>Mg(2+)</name>
        <dbReference type="ChEBI" id="CHEBI:18420"/>
    </ligand>
</feature>
<feature type="binding site" evidence="1">
    <location>
        <position position="251"/>
    </location>
    <ligand>
        <name>Mg(2+)</name>
        <dbReference type="ChEBI" id="CHEBI:18420"/>
    </ligand>
</feature>
<feature type="modified residue" description="Phosphoserine" evidence="1">
    <location>
        <position position="106"/>
    </location>
</feature>